<dbReference type="EC" id="5.3.1.12" evidence="1"/>
<dbReference type="EMBL" id="CP000557">
    <property type="protein sequence ID" value="ABO67129.1"/>
    <property type="molecule type" value="Genomic_DNA"/>
</dbReference>
<dbReference type="RefSeq" id="WP_008880074.1">
    <property type="nucleotide sequence ID" value="NC_009328.1"/>
</dbReference>
<dbReference type="SMR" id="A4IP75"/>
<dbReference type="GeneID" id="87624070"/>
<dbReference type="KEGG" id="gtn:GTNG_1765"/>
<dbReference type="eggNOG" id="COG1904">
    <property type="taxonomic scope" value="Bacteria"/>
</dbReference>
<dbReference type="HOGENOM" id="CLU_044465_1_0_9"/>
<dbReference type="UniPathway" id="UPA00246"/>
<dbReference type="Proteomes" id="UP000001578">
    <property type="component" value="Chromosome"/>
</dbReference>
<dbReference type="GO" id="GO:0008880">
    <property type="term" value="F:glucuronate isomerase activity"/>
    <property type="evidence" value="ECO:0007669"/>
    <property type="project" value="UniProtKB-UniRule"/>
</dbReference>
<dbReference type="GO" id="GO:0019698">
    <property type="term" value="P:D-galacturonate catabolic process"/>
    <property type="evidence" value="ECO:0007669"/>
    <property type="project" value="TreeGrafter"/>
</dbReference>
<dbReference type="GO" id="GO:0042840">
    <property type="term" value="P:D-glucuronate catabolic process"/>
    <property type="evidence" value="ECO:0007669"/>
    <property type="project" value="TreeGrafter"/>
</dbReference>
<dbReference type="Gene3D" id="3.20.20.140">
    <property type="entry name" value="Metal-dependent hydrolases"/>
    <property type="match status" value="1"/>
</dbReference>
<dbReference type="Gene3D" id="1.10.2020.10">
    <property type="entry name" value="uronate isomerase, domain 2, chain A"/>
    <property type="match status" value="1"/>
</dbReference>
<dbReference type="HAMAP" id="MF_00675">
    <property type="entry name" value="UxaC"/>
    <property type="match status" value="1"/>
</dbReference>
<dbReference type="InterPro" id="IPR032466">
    <property type="entry name" value="Metal_Hydrolase"/>
</dbReference>
<dbReference type="InterPro" id="IPR003766">
    <property type="entry name" value="Uronate_isomerase"/>
</dbReference>
<dbReference type="NCBIfam" id="NF002794">
    <property type="entry name" value="PRK02925.1"/>
    <property type="match status" value="1"/>
</dbReference>
<dbReference type="PANTHER" id="PTHR30068">
    <property type="entry name" value="URONATE ISOMERASE"/>
    <property type="match status" value="1"/>
</dbReference>
<dbReference type="PANTHER" id="PTHR30068:SF4">
    <property type="entry name" value="URONATE ISOMERASE"/>
    <property type="match status" value="1"/>
</dbReference>
<dbReference type="Pfam" id="PF02614">
    <property type="entry name" value="UxaC"/>
    <property type="match status" value="1"/>
</dbReference>
<dbReference type="SUPFAM" id="SSF51556">
    <property type="entry name" value="Metallo-dependent hydrolases"/>
    <property type="match status" value="1"/>
</dbReference>
<evidence type="ECO:0000255" key="1">
    <source>
        <dbReference type="HAMAP-Rule" id="MF_00675"/>
    </source>
</evidence>
<name>UXAC_GEOTN</name>
<reference key="1">
    <citation type="journal article" date="2007" name="Proc. Natl. Acad. Sci. U.S.A.">
        <title>Genome and proteome of long-chain alkane degrading Geobacillus thermodenitrificans NG80-2 isolated from a deep-subsurface oil reservoir.</title>
        <authorList>
            <person name="Feng L."/>
            <person name="Wang W."/>
            <person name="Cheng J."/>
            <person name="Ren Y."/>
            <person name="Zhao G."/>
            <person name="Gao C."/>
            <person name="Tang Y."/>
            <person name="Liu X."/>
            <person name="Han W."/>
            <person name="Peng X."/>
            <person name="Liu R."/>
            <person name="Wang L."/>
        </authorList>
    </citation>
    <scope>NUCLEOTIDE SEQUENCE [LARGE SCALE GENOMIC DNA]</scope>
    <source>
        <strain>NG80-2</strain>
    </source>
</reference>
<protein>
    <recommendedName>
        <fullName evidence="1">Uronate isomerase</fullName>
        <ecNumber evidence="1">5.3.1.12</ecNumber>
    </recommendedName>
    <alternativeName>
        <fullName evidence="1">Glucuronate isomerase</fullName>
    </alternativeName>
    <alternativeName>
        <fullName evidence="1">Uronic isomerase</fullName>
    </alternativeName>
</protein>
<keyword id="KW-0413">Isomerase</keyword>
<accession>A4IP75</accession>
<gene>
    <name evidence="1" type="primary">uxaC</name>
    <name type="ordered locus">GTNG_1765</name>
</gene>
<proteinExistence type="inferred from homology"/>
<organism>
    <name type="scientific">Geobacillus thermodenitrificans (strain NG80-2)</name>
    <dbReference type="NCBI Taxonomy" id="420246"/>
    <lineage>
        <taxon>Bacteria</taxon>
        <taxon>Bacillati</taxon>
        <taxon>Bacillota</taxon>
        <taxon>Bacilli</taxon>
        <taxon>Bacillales</taxon>
        <taxon>Anoxybacillaceae</taxon>
        <taxon>Geobacillus</taxon>
    </lineage>
</organism>
<comment type="catalytic activity">
    <reaction evidence="1">
        <text>D-glucuronate = D-fructuronate</text>
        <dbReference type="Rhea" id="RHEA:13049"/>
        <dbReference type="ChEBI" id="CHEBI:58720"/>
        <dbReference type="ChEBI" id="CHEBI:59863"/>
        <dbReference type="EC" id="5.3.1.12"/>
    </reaction>
</comment>
<comment type="catalytic activity">
    <reaction evidence="1">
        <text>aldehydo-D-galacturonate = keto-D-tagaturonate</text>
        <dbReference type="Rhea" id="RHEA:27702"/>
        <dbReference type="ChEBI" id="CHEBI:12952"/>
        <dbReference type="ChEBI" id="CHEBI:17886"/>
        <dbReference type="EC" id="5.3.1.12"/>
    </reaction>
</comment>
<comment type="pathway">
    <text evidence="1">Carbohydrate metabolism; pentose and glucuronate interconversion.</text>
</comment>
<comment type="similarity">
    <text evidence="1">Belongs to the metallo-dependent hydrolases superfamily. Uronate isomerase family.</text>
</comment>
<sequence>MQPFIDDRFLLQNKHAEVLYHDYAKSLPIIDYHCHLSAKEIAEDRRFHDMTELWLEGDHYKWRAMRALGVEEKYITGSASPEEKFQAWAKTVPYCIGNPLYHWTHLELKRYFQVGVLLNEQTWKEVWDHCNELLQQEGYSARSFMIQSNVEWIGTTDDPLDDLMDHQKIAQDSSFSIKVVPSFRPDAVIEINRPSFLDYVSKLGEVADLSVDDYGQLLQALENRVRYFHEAGCRMADHGLESMPYAECTLDEARVIFQKRKEGFALSREEEEKYQTFTLCFLARLYYSLGWVMQLHIGSIRNTNQKMFQQLGPNTGYDSINDFFFAQPLNAFLNRLERDGQLPKTIVYTLNPAYNYIVASTIGNFPSEGVKGKVQFGAAWWFNDHQDGIIRHLNDLANVGVFSTFVGMLTDSRSFLSYVRHEYFRRIVCNLIGSWIEKGEAPQDYAFLGKIVQDICYFNAKQYFDLS</sequence>
<feature type="chain" id="PRO_1000044767" description="Uronate isomerase">
    <location>
        <begin position="1"/>
        <end position="467"/>
    </location>
</feature>